<protein>
    <recommendedName>
        <fullName evidence="1">2,3-bisphosphoglycerate-dependent phosphoglycerate mutase</fullName>
        <shortName evidence="1">BPG-dependent PGAM</shortName>
        <shortName evidence="1">PGAM</shortName>
        <shortName evidence="1">Phosphoglyceromutase</shortName>
        <shortName evidence="1">dPGM</shortName>
        <ecNumber evidence="1">5.4.2.11</ecNumber>
    </recommendedName>
</protein>
<accession>Q74CR0</accession>
<name>GPMA_GEOSL</name>
<keyword id="KW-0312">Gluconeogenesis</keyword>
<keyword id="KW-0324">Glycolysis</keyword>
<keyword id="KW-0413">Isomerase</keyword>
<keyword id="KW-1185">Reference proteome</keyword>
<evidence type="ECO:0000255" key="1">
    <source>
        <dbReference type="HAMAP-Rule" id="MF_01039"/>
    </source>
</evidence>
<comment type="function">
    <text evidence="1">Catalyzes the interconversion of 2-phosphoglycerate and 3-phosphoglycerate.</text>
</comment>
<comment type="catalytic activity">
    <reaction evidence="1">
        <text>(2R)-2-phosphoglycerate = (2R)-3-phosphoglycerate</text>
        <dbReference type="Rhea" id="RHEA:15901"/>
        <dbReference type="ChEBI" id="CHEBI:58272"/>
        <dbReference type="ChEBI" id="CHEBI:58289"/>
        <dbReference type="EC" id="5.4.2.11"/>
    </reaction>
</comment>
<comment type="pathway">
    <text evidence="1">Carbohydrate degradation; glycolysis; pyruvate from D-glyceraldehyde 3-phosphate: step 3/5.</text>
</comment>
<comment type="subunit">
    <text evidence="1">Homodimer.</text>
</comment>
<comment type="similarity">
    <text evidence="1">Belongs to the phosphoglycerate mutase family. BPG-dependent PGAM subfamily.</text>
</comment>
<feature type="chain" id="PRO_0000179878" description="2,3-bisphosphoglycerate-dependent phosphoglycerate mutase">
    <location>
        <begin position="1"/>
        <end position="247"/>
    </location>
</feature>
<feature type="active site" description="Tele-phosphohistidine intermediate" evidence="1">
    <location>
        <position position="9"/>
    </location>
</feature>
<feature type="active site" description="Proton donor/acceptor" evidence="1">
    <location>
        <position position="87"/>
    </location>
</feature>
<feature type="binding site" evidence="1">
    <location>
        <begin position="8"/>
        <end position="15"/>
    </location>
    <ligand>
        <name>substrate</name>
    </ligand>
</feature>
<feature type="binding site" evidence="1">
    <location>
        <begin position="21"/>
        <end position="22"/>
    </location>
    <ligand>
        <name>substrate</name>
    </ligand>
</feature>
<feature type="binding site" evidence="1">
    <location>
        <position position="60"/>
    </location>
    <ligand>
        <name>substrate</name>
    </ligand>
</feature>
<feature type="binding site" evidence="1">
    <location>
        <begin position="87"/>
        <end position="90"/>
    </location>
    <ligand>
        <name>substrate</name>
    </ligand>
</feature>
<feature type="binding site" evidence="1">
    <location>
        <position position="98"/>
    </location>
    <ligand>
        <name>substrate</name>
    </ligand>
</feature>
<feature type="binding site" evidence="1">
    <location>
        <begin position="114"/>
        <end position="115"/>
    </location>
    <ligand>
        <name>substrate</name>
    </ligand>
</feature>
<feature type="binding site" evidence="1">
    <location>
        <begin position="183"/>
        <end position="184"/>
    </location>
    <ligand>
        <name>substrate</name>
    </ligand>
</feature>
<feature type="site" description="Transition state stabilizer" evidence="1">
    <location>
        <position position="182"/>
    </location>
</feature>
<proteinExistence type="inferred from homology"/>
<sequence>MRTLVLIRHGESVWNRENRFTGWTDVGLTDKGAAEALRAGRTLKNEGFAFDEAFTSVLKRAIKTLWIVLEEMDQMWIPEHRHWRLNERHYGALQGLNKAETAERHGMEQVHVWRRSYDIPPPPLAAGDPRNPARDPRYAELDPADIPLTESLKDTVARFLPYWHETIAPRILAGRRLLIAAHGNSLRALVKYLDGIGDDAIAGLNIPTGIPLVYELEDDLHPIRSYYLGDPDEVARATQSVADQVKR</sequence>
<organism>
    <name type="scientific">Geobacter sulfurreducens (strain ATCC 51573 / DSM 12127 / PCA)</name>
    <dbReference type="NCBI Taxonomy" id="243231"/>
    <lineage>
        <taxon>Bacteria</taxon>
        <taxon>Pseudomonadati</taxon>
        <taxon>Thermodesulfobacteriota</taxon>
        <taxon>Desulfuromonadia</taxon>
        <taxon>Geobacterales</taxon>
        <taxon>Geobacteraceae</taxon>
        <taxon>Geobacter</taxon>
    </lineage>
</organism>
<reference key="1">
    <citation type="journal article" date="2003" name="Science">
        <title>Genome of Geobacter sulfurreducens: metal reduction in subsurface environments.</title>
        <authorList>
            <person name="Methe B.A."/>
            <person name="Nelson K.E."/>
            <person name="Eisen J.A."/>
            <person name="Paulsen I.T."/>
            <person name="Nelson W.C."/>
            <person name="Heidelberg J.F."/>
            <person name="Wu D."/>
            <person name="Wu M."/>
            <person name="Ward N.L."/>
            <person name="Beanan M.J."/>
            <person name="Dodson R.J."/>
            <person name="Madupu R."/>
            <person name="Brinkac L.M."/>
            <person name="Daugherty S.C."/>
            <person name="DeBoy R.T."/>
            <person name="Durkin A.S."/>
            <person name="Gwinn M.L."/>
            <person name="Kolonay J.F."/>
            <person name="Sullivan S.A."/>
            <person name="Haft D.H."/>
            <person name="Selengut J."/>
            <person name="Davidsen T.M."/>
            <person name="Zafar N."/>
            <person name="White O."/>
            <person name="Tran B."/>
            <person name="Romero C."/>
            <person name="Forberger H.A."/>
            <person name="Weidman J.F."/>
            <person name="Khouri H.M."/>
            <person name="Feldblyum T.V."/>
            <person name="Utterback T.R."/>
            <person name="Van Aken S.E."/>
            <person name="Lovley D.R."/>
            <person name="Fraser C.M."/>
        </authorList>
    </citation>
    <scope>NUCLEOTIDE SEQUENCE [LARGE SCALE GENOMIC DNA]</scope>
    <source>
        <strain>ATCC 51573 / DSM 12127 / PCA</strain>
    </source>
</reference>
<gene>
    <name evidence="1" type="primary">gpmA</name>
    <name type="synonym">gpm</name>
    <name type="ordered locus">GSU1612</name>
</gene>
<dbReference type="EC" id="5.4.2.11" evidence="1"/>
<dbReference type="EMBL" id="AE017180">
    <property type="protein sequence ID" value="AAR34986.1"/>
    <property type="molecule type" value="Genomic_DNA"/>
</dbReference>
<dbReference type="RefSeq" id="NP_952663.1">
    <property type="nucleotide sequence ID" value="NC_002939.5"/>
</dbReference>
<dbReference type="RefSeq" id="WP_010942257.1">
    <property type="nucleotide sequence ID" value="NC_002939.5"/>
</dbReference>
<dbReference type="SMR" id="Q74CR0"/>
<dbReference type="FunCoup" id="Q74CR0">
    <property type="interactions" value="451"/>
</dbReference>
<dbReference type="STRING" id="243231.GSU1612"/>
<dbReference type="EnsemblBacteria" id="AAR34986">
    <property type="protein sequence ID" value="AAR34986"/>
    <property type="gene ID" value="GSU1612"/>
</dbReference>
<dbReference type="KEGG" id="gsu:GSU1612"/>
<dbReference type="PATRIC" id="fig|243231.5.peg.1654"/>
<dbReference type="eggNOG" id="COG0588">
    <property type="taxonomic scope" value="Bacteria"/>
</dbReference>
<dbReference type="HOGENOM" id="CLU_033323_1_1_7"/>
<dbReference type="InParanoid" id="Q74CR0"/>
<dbReference type="OrthoDB" id="9781415at2"/>
<dbReference type="UniPathway" id="UPA00109">
    <property type="reaction ID" value="UER00186"/>
</dbReference>
<dbReference type="Proteomes" id="UP000000577">
    <property type="component" value="Chromosome"/>
</dbReference>
<dbReference type="GO" id="GO:0004619">
    <property type="term" value="F:phosphoglycerate mutase activity"/>
    <property type="evidence" value="ECO:0007669"/>
    <property type="project" value="UniProtKB-EC"/>
</dbReference>
<dbReference type="GO" id="GO:0006094">
    <property type="term" value="P:gluconeogenesis"/>
    <property type="evidence" value="ECO:0007669"/>
    <property type="project" value="UniProtKB-UniRule"/>
</dbReference>
<dbReference type="GO" id="GO:0006096">
    <property type="term" value="P:glycolytic process"/>
    <property type="evidence" value="ECO:0007669"/>
    <property type="project" value="UniProtKB-UniRule"/>
</dbReference>
<dbReference type="CDD" id="cd07067">
    <property type="entry name" value="HP_PGM_like"/>
    <property type="match status" value="1"/>
</dbReference>
<dbReference type="FunFam" id="3.40.50.1240:FF:000003">
    <property type="entry name" value="2,3-bisphosphoglycerate-dependent phosphoglycerate mutase"/>
    <property type="match status" value="1"/>
</dbReference>
<dbReference type="Gene3D" id="3.40.50.1240">
    <property type="entry name" value="Phosphoglycerate mutase-like"/>
    <property type="match status" value="1"/>
</dbReference>
<dbReference type="HAMAP" id="MF_01039">
    <property type="entry name" value="PGAM_GpmA"/>
    <property type="match status" value="1"/>
</dbReference>
<dbReference type="InterPro" id="IPR013078">
    <property type="entry name" value="His_Pase_superF_clade-1"/>
</dbReference>
<dbReference type="InterPro" id="IPR029033">
    <property type="entry name" value="His_PPase_superfam"/>
</dbReference>
<dbReference type="InterPro" id="IPR001345">
    <property type="entry name" value="PG/BPGM_mutase_AS"/>
</dbReference>
<dbReference type="InterPro" id="IPR005952">
    <property type="entry name" value="Phosphogly_mut1"/>
</dbReference>
<dbReference type="NCBIfam" id="TIGR01258">
    <property type="entry name" value="pgm_1"/>
    <property type="match status" value="1"/>
</dbReference>
<dbReference type="NCBIfam" id="NF010713">
    <property type="entry name" value="PRK14115.1"/>
    <property type="match status" value="1"/>
</dbReference>
<dbReference type="PANTHER" id="PTHR11931">
    <property type="entry name" value="PHOSPHOGLYCERATE MUTASE"/>
    <property type="match status" value="1"/>
</dbReference>
<dbReference type="Pfam" id="PF00300">
    <property type="entry name" value="His_Phos_1"/>
    <property type="match status" value="1"/>
</dbReference>
<dbReference type="PIRSF" id="PIRSF000709">
    <property type="entry name" value="6PFK_2-Ptase"/>
    <property type="match status" value="1"/>
</dbReference>
<dbReference type="SMART" id="SM00855">
    <property type="entry name" value="PGAM"/>
    <property type="match status" value="1"/>
</dbReference>
<dbReference type="SUPFAM" id="SSF53254">
    <property type="entry name" value="Phosphoglycerate mutase-like"/>
    <property type="match status" value="1"/>
</dbReference>
<dbReference type="PROSITE" id="PS00175">
    <property type="entry name" value="PG_MUTASE"/>
    <property type="match status" value="1"/>
</dbReference>